<proteinExistence type="evidence at protein level"/>
<dbReference type="EC" id="1.14.15.24" evidence="2"/>
<dbReference type="EMBL" id="Y09225">
    <property type="protein sequence ID" value="CAA70427.1"/>
    <property type="molecule type" value="mRNA"/>
</dbReference>
<dbReference type="EMBL" id="GU122940">
    <property type="protein sequence ID" value="ADH04291.1"/>
    <property type="molecule type" value="Genomic_DNA"/>
</dbReference>
<dbReference type="EMBL" id="GU122946">
    <property type="protein sequence ID" value="ADH04297.1"/>
    <property type="molecule type" value="Genomic_DNA"/>
</dbReference>
<dbReference type="EMBL" id="GU122945">
    <property type="protein sequence ID" value="ADH04296.1"/>
    <property type="molecule type" value="Genomic_DNA"/>
</dbReference>
<dbReference type="EMBL" id="GU122944">
    <property type="protein sequence ID" value="ADH04295.1"/>
    <property type="molecule type" value="Genomic_DNA"/>
</dbReference>
<dbReference type="EMBL" id="GU122943">
    <property type="protein sequence ID" value="ADH04294.1"/>
    <property type="molecule type" value="Genomic_DNA"/>
</dbReference>
<dbReference type="EMBL" id="GU122942">
    <property type="protein sequence ID" value="ADH04293.1"/>
    <property type="molecule type" value="Genomic_DNA"/>
</dbReference>
<dbReference type="EMBL" id="GU122941">
    <property type="protein sequence ID" value="ADH04292.1"/>
    <property type="molecule type" value="Genomic_DNA"/>
</dbReference>
<dbReference type="EMBL" id="JQ031264">
    <property type="protein sequence ID" value="AFA50498.1"/>
    <property type="molecule type" value="mRNA"/>
</dbReference>
<dbReference type="EMBL" id="AYRZ02000003">
    <property type="protein sequence ID" value="PHT87364.1"/>
    <property type="molecule type" value="Genomic_DNA"/>
</dbReference>
<dbReference type="RefSeq" id="NP_001311784.1">
    <property type="nucleotide sequence ID" value="NM_001324855.1"/>
</dbReference>
<dbReference type="STRING" id="4072.D7P8N7"/>
<dbReference type="SwissLipids" id="SLP:000001508"/>
<dbReference type="EnsemblPlants" id="PHT87364">
    <property type="protein sequence ID" value="PHT87364"/>
    <property type="gene ID" value="T459_09470"/>
</dbReference>
<dbReference type="GeneID" id="107863219"/>
<dbReference type="Gramene" id="PHT87364">
    <property type="protein sequence ID" value="PHT87364"/>
    <property type="gene ID" value="T459_09470"/>
</dbReference>
<dbReference type="KEGG" id="ag:CAA70427"/>
<dbReference type="KEGG" id="cann:107863219"/>
<dbReference type="OMA" id="PEMLGTF"/>
<dbReference type="OrthoDB" id="9990796at2759"/>
<dbReference type="BRENDA" id="1.14.15.24">
    <property type="organism ID" value="1169"/>
</dbReference>
<dbReference type="Proteomes" id="UP000222542">
    <property type="component" value="Chromosome 3"/>
</dbReference>
<dbReference type="GO" id="GO:0031969">
    <property type="term" value="C:chloroplast membrane"/>
    <property type="evidence" value="ECO:0007669"/>
    <property type="project" value="UniProtKB-SubCell"/>
</dbReference>
<dbReference type="GO" id="GO:0010291">
    <property type="term" value="F:beta-carotene 3-hydroxylase activity"/>
    <property type="evidence" value="ECO:0007669"/>
    <property type="project" value="UniProtKB-EC"/>
</dbReference>
<dbReference type="GO" id="GO:0016787">
    <property type="term" value="F:hydrolase activity"/>
    <property type="evidence" value="ECO:0007669"/>
    <property type="project" value="UniProtKB-KW"/>
</dbReference>
<dbReference type="GO" id="GO:0005506">
    <property type="term" value="F:iron ion binding"/>
    <property type="evidence" value="ECO:0007669"/>
    <property type="project" value="InterPro"/>
</dbReference>
<dbReference type="GO" id="GO:0016117">
    <property type="term" value="P:carotenoid biosynthetic process"/>
    <property type="evidence" value="ECO:0007669"/>
    <property type="project" value="UniProtKB-KW"/>
</dbReference>
<dbReference type="InterPro" id="IPR045019">
    <property type="entry name" value="BETA-OHASE-like"/>
</dbReference>
<dbReference type="InterPro" id="IPR006694">
    <property type="entry name" value="Fatty_acid_hydroxylase"/>
</dbReference>
<dbReference type="PANTHER" id="PTHR31899">
    <property type="entry name" value="BETA-CAROTENE 3-HYDROXYLASE 1, CHLOROPLASTIC"/>
    <property type="match status" value="1"/>
</dbReference>
<dbReference type="PANTHER" id="PTHR31899:SF9">
    <property type="entry name" value="BETA-CAROTENE 3-HYDROXYLASE 1, CHLOROPLASTIC"/>
    <property type="match status" value="1"/>
</dbReference>
<dbReference type="Pfam" id="PF04116">
    <property type="entry name" value="FA_hydroxylase"/>
    <property type="match status" value="1"/>
</dbReference>
<sequence>MAAEISISASSRAICLQRNPFPAPKYFATAPPLLFFSPLTCNLDAILRSRRKPRLAACFVLKDDKLYTAQSGKQSDTEAIGDEIEVETNEEKSLAVRLAEKFARKKSERFTYLVAAVMSSLGITSMAVISVYYRFSWQMEGGEMPFSEMFCTFALAFGAAIGMEYWARWAHRALWHASLWHMHESHHRPREGPFELNDIFAIINAVPAIALLSFGFNHKGLIPGLCFGAGLGITVFGMAYMFVHDGLVHKRFPVGPIANVPYFQRVAAAHQLHHSDKFDGVPYGLFLGPKELEEVGVLEELEKEVNRRIKSSKRL</sequence>
<comment type="function">
    <text evidence="2">Nonheme diiron monooxygenase involved in the biosynthesis of xanthophylls. Specific for beta-ring hydroxylations of beta-carotene. Produces beta-cryptoxanthin and zeaxanthin. Uses ferredoxin as an electron donor.</text>
</comment>
<comment type="catalytic activity">
    <reaction evidence="2">
        <text>all-trans-beta-carotene + 4 reduced [2Fe-2S]-[ferredoxin] + 2 O2 + 4 H(+) = all-trans-zeaxanthin + 4 oxidized [2Fe-2S]-[ferredoxin] + 2 H2O</text>
        <dbReference type="Rhea" id="RHEA:30331"/>
        <dbReference type="Rhea" id="RHEA-COMP:10000"/>
        <dbReference type="Rhea" id="RHEA-COMP:10001"/>
        <dbReference type="ChEBI" id="CHEBI:15377"/>
        <dbReference type="ChEBI" id="CHEBI:15378"/>
        <dbReference type="ChEBI" id="CHEBI:15379"/>
        <dbReference type="ChEBI" id="CHEBI:17579"/>
        <dbReference type="ChEBI" id="CHEBI:27547"/>
        <dbReference type="ChEBI" id="CHEBI:33737"/>
        <dbReference type="ChEBI" id="CHEBI:33738"/>
        <dbReference type="EC" id="1.14.15.24"/>
    </reaction>
    <physiologicalReaction direction="left-to-right" evidence="2">
        <dbReference type="Rhea" id="RHEA:30332"/>
    </physiologicalReaction>
</comment>
<comment type="catalytic activity">
    <reaction evidence="2">
        <text>all-trans-beta-carotene + 2 reduced [2Fe-2S]-[ferredoxin] + O2 + 2 H(+) = beta-cryptoxanthin + 2 oxidized [2Fe-2S]-[ferredoxin] + H2O</text>
        <dbReference type="Rhea" id="RHEA:30323"/>
        <dbReference type="Rhea" id="RHEA-COMP:10000"/>
        <dbReference type="Rhea" id="RHEA-COMP:10001"/>
        <dbReference type="ChEBI" id="CHEBI:10362"/>
        <dbReference type="ChEBI" id="CHEBI:15377"/>
        <dbReference type="ChEBI" id="CHEBI:15378"/>
        <dbReference type="ChEBI" id="CHEBI:15379"/>
        <dbReference type="ChEBI" id="CHEBI:17579"/>
        <dbReference type="ChEBI" id="CHEBI:33737"/>
        <dbReference type="ChEBI" id="CHEBI:33738"/>
    </reaction>
    <physiologicalReaction direction="left-to-right" evidence="2">
        <dbReference type="Rhea" id="RHEA:30324"/>
    </physiologicalReaction>
</comment>
<comment type="catalytic activity">
    <reaction evidence="2">
        <text>beta-cryptoxanthin + 2 reduced [2Fe-2S]-[ferredoxin] + O2 + 2 H(+) = all-trans-zeaxanthin + 2 oxidized [2Fe-2S]-[ferredoxin] + H2O</text>
        <dbReference type="Rhea" id="RHEA:30327"/>
        <dbReference type="Rhea" id="RHEA-COMP:10000"/>
        <dbReference type="Rhea" id="RHEA-COMP:10001"/>
        <dbReference type="ChEBI" id="CHEBI:10362"/>
        <dbReference type="ChEBI" id="CHEBI:15377"/>
        <dbReference type="ChEBI" id="CHEBI:15378"/>
        <dbReference type="ChEBI" id="CHEBI:15379"/>
        <dbReference type="ChEBI" id="CHEBI:27547"/>
        <dbReference type="ChEBI" id="CHEBI:33737"/>
        <dbReference type="ChEBI" id="CHEBI:33738"/>
    </reaction>
    <physiologicalReaction direction="left-to-right" evidence="2">
        <dbReference type="Rhea" id="RHEA:30328"/>
    </physiologicalReaction>
</comment>
<comment type="activity regulation">
    <text evidence="2">Inhibited by o-phenanthroline and 8-hydroxyquinoline.</text>
</comment>
<comment type="subcellular location">
    <subcellularLocation>
        <location evidence="4">Plastid</location>
        <location evidence="4">Chloroplast membrane</location>
        <topology evidence="4">Multi-pass membrane protein</topology>
    </subcellularLocation>
</comment>
<comment type="developmental stage">
    <text evidence="2">Up-regulated during chloroplast to chromoplast transition stage.</text>
</comment>
<comment type="domain">
    <text>The histidine box domains may contain the active site and/or be involved in iron binding.</text>
</comment>
<comment type="similarity">
    <text evidence="4">Belongs to the sterol desaturase family.</text>
</comment>
<evidence type="ECO:0000255" key="1"/>
<evidence type="ECO:0000269" key="2">
    <source>
    </source>
</evidence>
<evidence type="ECO:0000303" key="3">
    <source>
    </source>
</evidence>
<evidence type="ECO:0000305" key="4"/>
<evidence type="ECO:0000305" key="5">
    <source>
    </source>
</evidence>
<evidence type="ECO:0000312" key="6">
    <source>
        <dbReference type="EMBL" id="ADH04291.1"/>
    </source>
</evidence>
<evidence type="ECO:0000312" key="7">
    <source>
        <dbReference type="EMBL" id="PHT87364.1"/>
    </source>
</evidence>
<gene>
    <name evidence="3" type="primary">CA1</name>
    <name evidence="6" type="synonym">CrtZ-2</name>
    <name type="ORF">LOC107863219</name>
    <name evidence="7" type="ORF">T459_09470</name>
</gene>
<accession>O49815</accession>
<accession>A0A1U8FZA1</accession>
<accession>D7P8N7</accession>
<keyword id="KW-0125">Carotenoid biosynthesis</keyword>
<keyword id="KW-0150">Chloroplast</keyword>
<keyword id="KW-0378">Hydrolase</keyword>
<keyword id="KW-0408">Iron</keyword>
<keyword id="KW-0472">Membrane</keyword>
<keyword id="KW-0479">Metal-binding</keyword>
<keyword id="KW-0520">NAD</keyword>
<keyword id="KW-0560">Oxidoreductase</keyword>
<keyword id="KW-0934">Plastid</keyword>
<keyword id="KW-1185">Reference proteome</keyword>
<keyword id="KW-0809">Transit peptide</keyword>
<keyword id="KW-0812">Transmembrane</keyword>
<keyword id="KW-1133">Transmembrane helix</keyword>
<organism>
    <name type="scientific">Capsicum annuum</name>
    <name type="common">Capsicum pepper</name>
    <dbReference type="NCBI Taxonomy" id="4072"/>
    <lineage>
        <taxon>Eukaryota</taxon>
        <taxon>Viridiplantae</taxon>
        <taxon>Streptophyta</taxon>
        <taxon>Embryophyta</taxon>
        <taxon>Tracheophyta</taxon>
        <taxon>Spermatophyta</taxon>
        <taxon>Magnoliopsida</taxon>
        <taxon>eudicotyledons</taxon>
        <taxon>Gunneridae</taxon>
        <taxon>Pentapetalae</taxon>
        <taxon>asterids</taxon>
        <taxon>lamiids</taxon>
        <taxon>Solanales</taxon>
        <taxon>Solanaceae</taxon>
        <taxon>Solanoideae</taxon>
        <taxon>Capsiceae</taxon>
        <taxon>Capsicum</taxon>
    </lineage>
</organism>
<protein>
    <recommendedName>
        <fullName evidence="4">Beta-carotene hydroxylase 1, chloroplastic</fullName>
        <ecNumber evidence="2">1.14.15.24</ecNumber>
    </recommendedName>
</protein>
<name>BCH1_CAPAN</name>
<reference key="1">
    <citation type="journal article" date="1998" name="Biochim. Biophys. Acta">
        <title>Xanthophyll biosynthesis: molecular and functional characterization of carotenoid hydroxylases from pepper fruits (Capsicum annuum L.).</title>
        <authorList>
            <person name="Bouvier F."/>
            <person name="Keller Y."/>
            <person name="d'Harlingue A."/>
            <person name="Camara B."/>
        </authorList>
    </citation>
    <scope>NUCLEOTIDE SEQUENCE [MRNA]</scope>
    <scope>FUNCTION</scope>
    <scope>CATALYTIC ACTIVITY</scope>
    <scope>DEVELOPMENTAL STAGE</scope>
    <scope>ACTIVITY REGULATION</scope>
    <scope>MOTIF</scope>
    <scope>MUTAGENESIS OF HIS-171; HIS-176; HIS-183; HIS-186; HIS-187; HIS-244; HIS-249; HIS-270; HIS-273 AND HIS-274</scope>
</reference>
<reference key="2">
    <citation type="journal article" date="2010" name="Plant Sci.">
        <title>Variability of carotenoid biosynthesis in orange colored Capsicum spp.</title>
        <authorList>
            <person name="Guzman I."/>
            <person name="Hamby S."/>
            <person name="Romero J."/>
            <person name="Bosland P.W."/>
            <person name="O'Connell M.A."/>
        </authorList>
    </citation>
    <scope>NUCLEOTIDE SEQUENCE [GENOMIC DNA]</scope>
    <source>
        <tissue>Pericarp</tissue>
    </source>
</reference>
<reference key="3">
    <citation type="journal article" date="2013" name="Theor. Appl. Genet.">
        <title>Induced mutation in beta-CAROTENE HYDROXYLASE results in accumulation of beta-carotene and conversion of red to orange color in pepper fruit.</title>
        <authorList>
            <person name="Borovsky Y."/>
            <person name="Tadmor Y."/>
            <person name="Bar E."/>
            <person name="Meir A."/>
            <person name="Lewinsohn E."/>
            <person name="Paran I."/>
        </authorList>
    </citation>
    <scope>NUCLEOTIDE SEQUENCE [MRNA]</scope>
</reference>
<reference key="4">
    <citation type="journal article" date="2014" name="Nat. Genet.">
        <title>Genome sequence of the hot pepper provides insights into the evolution of pungency in Capsicum species.</title>
        <authorList>
            <person name="Kim S."/>
            <person name="Park M."/>
            <person name="Yeom S.I."/>
            <person name="Kim Y.M."/>
            <person name="Lee J.M."/>
            <person name="Lee H.A."/>
            <person name="Seo E."/>
            <person name="Choi J."/>
            <person name="Cheong K."/>
            <person name="Kim K.T."/>
            <person name="Jung K."/>
            <person name="Lee G.W."/>
            <person name="Oh S.K."/>
            <person name="Bae C."/>
            <person name="Kim S.B."/>
            <person name="Lee H.Y."/>
            <person name="Kim S.Y."/>
            <person name="Kim M.S."/>
            <person name="Kang B.C."/>
            <person name="Jo Y.D."/>
            <person name="Yang H.B."/>
            <person name="Jeong H.J."/>
            <person name="Kang W.H."/>
            <person name="Kwon J.K."/>
            <person name="Shin C."/>
            <person name="Lim J.Y."/>
            <person name="Park J.H."/>
            <person name="Huh J.H."/>
            <person name="Kim J.S."/>
            <person name="Kim B.D."/>
            <person name="Cohen O."/>
            <person name="Paran I."/>
            <person name="Suh M.C."/>
            <person name="Lee S.B."/>
            <person name="Kim Y.K."/>
            <person name="Shin Y."/>
            <person name="Noh S.J."/>
            <person name="Park J."/>
            <person name="Seo Y.S."/>
            <person name="Kwon S.Y."/>
            <person name="Kim H.A."/>
            <person name="Park J.M."/>
            <person name="Kim H.J."/>
            <person name="Choi S.B."/>
            <person name="Bosland P.W."/>
            <person name="Reeves G."/>
            <person name="Jo S.H."/>
            <person name="Lee B.W."/>
            <person name="Cho H.T."/>
            <person name="Choi H.S."/>
            <person name="Lee M.S."/>
            <person name="Yu Y."/>
            <person name="Do Choi Y."/>
            <person name="Park B.S."/>
            <person name="van Deynze A."/>
            <person name="Ashrafi H."/>
            <person name="Hill T."/>
            <person name="Kim W.T."/>
            <person name="Pai H.S."/>
            <person name="Ahn H.K."/>
            <person name="Yeam I."/>
            <person name="Giovannoni J.J."/>
            <person name="Rose J.K."/>
            <person name="Soerensen I."/>
            <person name="Lee S.J."/>
            <person name="Kim R.W."/>
            <person name="Choi I.Y."/>
            <person name="Choi B.S."/>
            <person name="Lim J.S."/>
            <person name="Lee Y.H."/>
            <person name="Choi D."/>
        </authorList>
    </citation>
    <scope>NUCLEOTIDE SEQUENCE [LARGE SCALE GENOMIC DNA]</scope>
</reference>
<reference key="5">
    <citation type="journal article" date="2014" name="Proc. Natl. Acad. Sci. U.S.A.">
        <title>Whole-genome sequencing of cultivated and wild peppers provides insights into Capsicum domestication and specialization.</title>
        <authorList>
            <person name="Qin C."/>
            <person name="Yu C."/>
            <person name="Shen Y."/>
            <person name="Fang X."/>
            <person name="Chen L."/>
            <person name="Min J."/>
            <person name="Cheng J."/>
            <person name="Zhao S."/>
            <person name="Xu M."/>
            <person name="Luo Y."/>
            <person name="Yang Y."/>
            <person name="Wu Z."/>
            <person name="Mao L."/>
            <person name="Wu H."/>
            <person name="Ling-Hu C."/>
            <person name="Zhou H."/>
            <person name="Lin H."/>
            <person name="Gonzalez-Morales S."/>
            <person name="Trejo-Saavedra D.L."/>
            <person name="Tian H."/>
            <person name="Tang X."/>
            <person name="Zhao M."/>
            <person name="Huang Z."/>
            <person name="Zhou A."/>
            <person name="Yao X."/>
            <person name="Cui J."/>
            <person name="Li W."/>
            <person name="Chen Z."/>
            <person name="Feng Y."/>
            <person name="Niu Y."/>
            <person name="Bi S."/>
            <person name="Yang X."/>
            <person name="Li W."/>
            <person name="Cai H."/>
            <person name="Luo X."/>
            <person name="Montes-Hernandez S."/>
            <person name="Leyva-Gonzalez M.A."/>
            <person name="Xiong Z."/>
            <person name="He X."/>
            <person name="Bai L."/>
            <person name="Tan S."/>
            <person name="Tang X."/>
            <person name="Liu D."/>
            <person name="Liu J."/>
            <person name="Zhang S."/>
            <person name="Chen M."/>
            <person name="Zhang L."/>
            <person name="Zhang L."/>
            <person name="Zhang Y."/>
            <person name="Liao W."/>
            <person name="Zhang Y."/>
            <person name="Wang M."/>
            <person name="Lv X."/>
            <person name="Wen B."/>
            <person name="Liu H."/>
            <person name="Luan H."/>
            <person name="Zhang Y."/>
            <person name="Yang S."/>
            <person name="Wang X."/>
            <person name="Xu J."/>
            <person name="Li X."/>
            <person name="Li S."/>
            <person name="Wang J."/>
            <person name="Palloix A."/>
            <person name="Bosland P.W."/>
            <person name="Li Y."/>
            <person name="Krogh A."/>
            <person name="Rivera-Bustamante R.F."/>
            <person name="Herrera-Estrella L."/>
            <person name="Yin Y."/>
            <person name="Yu J."/>
            <person name="Hu K."/>
            <person name="Zhang Z."/>
        </authorList>
    </citation>
    <scope>NUCLEOTIDE SEQUENCE [LARGE SCALE GENOMIC DNA]</scope>
    <source>
        <strain>cv. Zunla-1</strain>
    </source>
</reference>
<reference key="6">
    <citation type="journal article" date="2017" name="Genome Biol.">
        <title>New reference genome sequences of hot pepper reveal the massive evolution of plant disease-resistance genes by retroduplication.</title>
        <authorList>
            <person name="Kim S."/>
            <person name="Park J."/>
            <person name="Yeom S.I."/>
            <person name="Kim Y.M."/>
            <person name="Seo E."/>
            <person name="Kim K.T."/>
            <person name="Kim M.S."/>
            <person name="Lee J.M."/>
            <person name="Cheong K."/>
            <person name="Shin H.S."/>
            <person name="Kim S.B."/>
            <person name="Han K."/>
            <person name="Lee J."/>
            <person name="Park M."/>
            <person name="Lee H.A."/>
            <person name="Lee H.Y."/>
            <person name="Lee Y."/>
            <person name="Oh S."/>
            <person name="Lee J.H."/>
            <person name="Choi E."/>
            <person name="Choi E."/>
            <person name="Lee S.E."/>
            <person name="Jeon J."/>
            <person name="Kim H."/>
            <person name="Choi G."/>
            <person name="Song H."/>
            <person name="Lee J."/>
            <person name="Lee S.C."/>
            <person name="Kwon J.K."/>
            <person name="Lee H.Y."/>
            <person name="Koo N."/>
            <person name="Hong Y."/>
            <person name="Kim R.W."/>
            <person name="Kang W.H."/>
            <person name="Huh J.H."/>
            <person name="Kang B.C."/>
            <person name="Yang T.J."/>
            <person name="Lee Y.H."/>
            <person name="Bennetzen J.L."/>
            <person name="Choi D."/>
        </authorList>
    </citation>
    <scope>NUCLEOTIDE SEQUENCE [LARGE SCALE GENOMIC DNA]</scope>
    <source>
        <strain>cv. CM334</strain>
    </source>
</reference>
<feature type="transit peptide" description="Chloroplast" evidence="1">
    <location>
        <begin position="1"/>
        <end position="58"/>
    </location>
</feature>
<feature type="chain" id="PRO_0000412806" description="Beta-carotene hydroxylase 1, chloroplastic">
    <location>
        <begin position="59"/>
        <end position="315"/>
    </location>
</feature>
<feature type="transmembrane region" description="Helical" evidence="1">
    <location>
        <begin position="112"/>
        <end position="132"/>
    </location>
</feature>
<feature type="transmembrane region" description="Helical" evidence="1">
    <location>
        <begin position="146"/>
        <end position="166"/>
    </location>
</feature>
<feature type="transmembrane region" description="Helical" evidence="1">
    <location>
        <begin position="196"/>
        <end position="216"/>
    </location>
</feature>
<feature type="transmembrane region" description="Helical" evidence="1">
    <location>
        <begin position="222"/>
        <end position="242"/>
    </location>
</feature>
<feature type="domain" description="Fatty acid hydroxylase" evidence="1">
    <location>
        <begin position="159"/>
        <end position="286"/>
    </location>
</feature>
<feature type="short sequence motif" description="Histidine box-1" evidence="5">
    <location>
        <begin position="171"/>
        <end position="176"/>
    </location>
</feature>
<feature type="short sequence motif" description="Histidine box-2" evidence="5">
    <location>
        <begin position="183"/>
        <end position="187"/>
    </location>
</feature>
<feature type="short sequence motif" description="Histidine box-3" evidence="5">
    <location>
        <begin position="244"/>
        <end position="249"/>
    </location>
</feature>
<feature type="short sequence motif" description="Histidine box-4" evidence="5">
    <location>
        <begin position="270"/>
        <end position="274"/>
    </location>
</feature>
<feature type="mutagenesis site" description="Loss of activity." evidence="2">
    <original>H</original>
    <variation>A</variation>
    <location>
        <position position="171"/>
    </location>
</feature>
<feature type="mutagenesis site" description="Loss of activity." evidence="2">
    <original>H</original>
    <variation>A</variation>
    <location>
        <position position="176"/>
    </location>
</feature>
<feature type="mutagenesis site" description="Loss of activity." evidence="2">
    <original>H</original>
    <variation>A</variation>
    <location>
        <position position="183"/>
    </location>
</feature>
<feature type="mutagenesis site" description="Loss of activity." evidence="2">
    <original>H</original>
    <variation>A</variation>
    <location>
        <position position="186"/>
    </location>
</feature>
<feature type="mutagenesis site" description="Loss of activity." evidence="2">
    <original>H</original>
    <variation>A</variation>
    <location>
        <position position="187"/>
    </location>
</feature>
<feature type="mutagenesis site" description="Loss of activity." evidence="2">
    <original>H</original>
    <variation>A</variation>
    <location>
        <position position="244"/>
    </location>
</feature>
<feature type="mutagenesis site" description="Loss of activity." evidence="2">
    <original>H</original>
    <variation>A</variation>
    <location>
        <position position="249"/>
    </location>
</feature>
<feature type="mutagenesis site" description="Loss of activity." evidence="2">
    <original>H</original>
    <variation>A</variation>
    <location>
        <position position="270"/>
    </location>
</feature>
<feature type="mutagenesis site" description="Loss of activity." evidence="2">
    <original>H</original>
    <variation>A</variation>
    <location>
        <position position="273"/>
    </location>
</feature>
<feature type="mutagenesis site" description="Loss of activity." evidence="2">
    <original>H</original>
    <variation>A</variation>
    <location>
        <position position="274"/>
    </location>
</feature>
<feature type="sequence conflict" description="In Ref. 1; CAA70427." ref="1">
    <original>LL</original>
    <variation>FF</variation>
    <location>
        <begin position="211"/>
        <end position="212"/>
    </location>
</feature>
<feature type="sequence conflict" description="In Ref. 1; CAA70427." ref="1">
    <original>L</original>
    <variation>I</variation>
    <location>
        <position position="225"/>
    </location>
</feature>
<feature type="sequence conflict" description="In Ref. 1; CAA70427." ref="1">
    <original>N</original>
    <variation>K</variation>
    <location>
        <position position="259"/>
    </location>
</feature>
<feature type="sequence conflict" description="In Ref. 1; CAA70427." ref="1">
    <original>L</original>
    <variation>I</variation>
    <location>
        <position position="298"/>
    </location>
</feature>
<feature type="sequence conflict" description="In Ref. 1; CAA70427." ref="1">
    <original>S</original>
    <variation>L</variation>
    <location>
        <position position="312"/>
    </location>
</feature>